<reference key="1">
    <citation type="journal article" date="2001" name="DNA Res.">
        <title>Prediction of the coding sequences of unidentified human genes. XXI. The complete sequences of 60 new cDNA clones from brain which code for large proteins.</title>
        <authorList>
            <person name="Nagase T."/>
            <person name="Kikuno R."/>
            <person name="Ohara O."/>
        </authorList>
    </citation>
    <scope>NUCLEOTIDE SEQUENCE [LARGE SCALE MRNA] (ISOFORM 1)</scope>
    <source>
        <tissue>Brain</tissue>
    </source>
</reference>
<reference key="2">
    <citation type="journal article" date="2002" name="DNA Res.">
        <title>Construction of expression-ready cDNA clones for KIAA genes: manual curation of 330 KIAA cDNA clones.</title>
        <authorList>
            <person name="Nakajima D."/>
            <person name="Okazaki N."/>
            <person name="Yamakawa H."/>
            <person name="Kikuno R."/>
            <person name="Ohara O."/>
            <person name="Nagase T."/>
        </authorList>
    </citation>
    <scope>SEQUENCE REVISION</scope>
</reference>
<reference key="3">
    <citation type="journal article" date="2004" name="Nat. Genet.">
        <title>Complete sequencing and characterization of 21,243 full-length human cDNAs.</title>
        <authorList>
            <person name="Ota T."/>
            <person name="Suzuki Y."/>
            <person name="Nishikawa T."/>
            <person name="Otsuki T."/>
            <person name="Sugiyama T."/>
            <person name="Irie R."/>
            <person name="Wakamatsu A."/>
            <person name="Hayashi K."/>
            <person name="Sato H."/>
            <person name="Nagai K."/>
            <person name="Kimura K."/>
            <person name="Makita H."/>
            <person name="Sekine M."/>
            <person name="Obayashi M."/>
            <person name="Nishi T."/>
            <person name="Shibahara T."/>
            <person name="Tanaka T."/>
            <person name="Ishii S."/>
            <person name="Yamamoto J."/>
            <person name="Saito K."/>
            <person name="Kawai Y."/>
            <person name="Isono Y."/>
            <person name="Nakamura Y."/>
            <person name="Nagahari K."/>
            <person name="Murakami K."/>
            <person name="Yasuda T."/>
            <person name="Iwayanagi T."/>
            <person name="Wagatsuma M."/>
            <person name="Shiratori A."/>
            <person name="Sudo H."/>
            <person name="Hosoiri T."/>
            <person name="Kaku Y."/>
            <person name="Kodaira H."/>
            <person name="Kondo H."/>
            <person name="Sugawara M."/>
            <person name="Takahashi M."/>
            <person name="Kanda K."/>
            <person name="Yokoi T."/>
            <person name="Furuya T."/>
            <person name="Kikkawa E."/>
            <person name="Omura Y."/>
            <person name="Abe K."/>
            <person name="Kamihara K."/>
            <person name="Katsuta N."/>
            <person name="Sato K."/>
            <person name="Tanikawa M."/>
            <person name="Yamazaki M."/>
            <person name="Ninomiya K."/>
            <person name="Ishibashi T."/>
            <person name="Yamashita H."/>
            <person name="Murakawa K."/>
            <person name="Fujimori K."/>
            <person name="Tanai H."/>
            <person name="Kimata M."/>
            <person name="Watanabe M."/>
            <person name="Hiraoka S."/>
            <person name="Chiba Y."/>
            <person name="Ishida S."/>
            <person name="Ono Y."/>
            <person name="Takiguchi S."/>
            <person name="Watanabe S."/>
            <person name="Yosida M."/>
            <person name="Hotuta T."/>
            <person name="Kusano J."/>
            <person name="Kanehori K."/>
            <person name="Takahashi-Fujii A."/>
            <person name="Hara H."/>
            <person name="Tanase T.-O."/>
            <person name="Nomura Y."/>
            <person name="Togiya S."/>
            <person name="Komai F."/>
            <person name="Hara R."/>
            <person name="Takeuchi K."/>
            <person name="Arita M."/>
            <person name="Imose N."/>
            <person name="Musashino K."/>
            <person name="Yuuki H."/>
            <person name="Oshima A."/>
            <person name="Sasaki N."/>
            <person name="Aotsuka S."/>
            <person name="Yoshikawa Y."/>
            <person name="Matsunawa H."/>
            <person name="Ichihara T."/>
            <person name="Shiohata N."/>
            <person name="Sano S."/>
            <person name="Moriya S."/>
            <person name="Momiyama H."/>
            <person name="Satoh N."/>
            <person name="Takami S."/>
            <person name="Terashima Y."/>
            <person name="Suzuki O."/>
            <person name="Nakagawa S."/>
            <person name="Senoh A."/>
            <person name="Mizoguchi H."/>
            <person name="Goto Y."/>
            <person name="Shimizu F."/>
            <person name="Wakebe H."/>
            <person name="Hishigaki H."/>
            <person name="Watanabe T."/>
            <person name="Sugiyama A."/>
            <person name="Takemoto M."/>
            <person name="Kawakami B."/>
            <person name="Yamazaki M."/>
            <person name="Watanabe K."/>
            <person name="Kumagai A."/>
            <person name="Itakura S."/>
            <person name="Fukuzumi Y."/>
            <person name="Fujimori Y."/>
            <person name="Komiyama M."/>
            <person name="Tashiro H."/>
            <person name="Tanigami A."/>
            <person name="Fujiwara T."/>
            <person name="Ono T."/>
            <person name="Yamada K."/>
            <person name="Fujii Y."/>
            <person name="Ozaki K."/>
            <person name="Hirao M."/>
            <person name="Ohmori Y."/>
            <person name="Kawabata A."/>
            <person name="Hikiji T."/>
            <person name="Kobatake N."/>
            <person name="Inagaki H."/>
            <person name="Ikema Y."/>
            <person name="Okamoto S."/>
            <person name="Okitani R."/>
            <person name="Kawakami T."/>
            <person name="Noguchi S."/>
            <person name="Itoh T."/>
            <person name="Shigeta K."/>
            <person name="Senba T."/>
            <person name="Matsumura K."/>
            <person name="Nakajima Y."/>
            <person name="Mizuno T."/>
            <person name="Morinaga M."/>
            <person name="Sasaki M."/>
            <person name="Togashi T."/>
            <person name="Oyama M."/>
            <person name="Hata H."/>
            <person name="Watanabe M."/>
            <person name="Komatsu T."/>
            <person name="Mizushima-Sugano J."/>
            <person name="Satoh T."/>
            <person name="Shirai Y."/>
            <person name="Takahashi Y."/>
            <person name="Nakagawa K."/>
            <person name="Okumura K."/>
            <person name="Nagase T."/>
            <person name="Nomura N."/>
            <person name="Kikuchi H."/>
            <person name="Masuho Y."/>
            <person name="Yamashita R."/>
            <person name="Nakai K."/>
            <person name="Yada T."/>
            <person name="Nakamura Y."/>
            <person name="Ohara O."/>
            <person name="Isogai T."/>
            <person name="Sugano S."/>
        </authorList>
    </citation>
    <scope>NUCLEOTIDE SEQUENCE [LARGE SCALE MRNA] OF 17-679 (ISOFORM 2)</scope>
    <scope>NUCLEOTIDE SEQUENCE [LARGE SCALE MRNA] OF 285-679 (ISOFORM 1)</scope>
    <source>
        <tissue>Brain</tissue>
    </source>
</reference>
<reference key="4">
    <citation type="journal article" date="2010" name="Proteomics">
        <title>Strategy for comprehensive identification of human N-myristoylated proteins using an insect cell-free protein synthesis system.</title>
        <authorList>
            <person name="Suzuki T."/>
            <person name="Moriya K."/>
            <person name="Nagatoshi K."/>
            <person name="Ota Y."/>
            <person name="Ezure T."/>
            <person name="Ando E."/>
            <person name="Tsunasawa S."/>
            <person name="Utsumi T."/>
        </authorList>
    </citation>
    <scope>MYRISTOYLATION AT GLY-2</scope>
</reference>
<reference key="5">
    <citation type="journal article" date="2015" name="Cell Death Differ.">
        <title>Regulation of neuronal survival and morphology by the E3 ubiquitin ligase RNF157.</title>
        <authorList>
            <person name="Matz A."/>
            <person name="Lee S.J."/>
            <person name="Schwedhelm-Domeyer N."/>
            <person name="Zanini D."/>
            <person name="Holubowska A."/>
            <person name="Kannan M."/>
            <person name="Farnworth M."/>
            <person name="Jahn O."/>
            <person name="Goepfert M.C."/>
            <person name="Stegmueller J."/>
        </authorList>
    </citation>
    <scope>FUNCTION</scope>
    <scope>CATALYTIC ACTIVITY</scope>
    <scope>INTERACTION WITH APBB1</scope>
</reference>
<reference key="6">
    <citation type="journal article" date="2017" name="J. Biol. Chem.">
        <title>Role of the E3 ubiquitin ligase RNF157 as a novel downstream effector linking PI3K and MAPK signaling pathways to the cell cycle.</title>
        <authorList>
            <person name="Dogan T."/>
            <person name="Gnad F."/>
            <person name="Chan J."/>
            <person name="Phu L."/>
            <person name="Young A."/>
            <person name="Chen M.J."/>
            <person name="Doll S."/>
            <person name="Stokes M.P."/>
            <person name="Belvin M."/>
            <person name="Friedman L.S."/>
            <person name="Kirkpatrick D.S."/>
            <person name="Hoeflich K.P."/>
            <person name="Hatzivassiliou G."/>
        </authorList>
    </citation>
    <scope>FUNCTION</scope>
    <scope>INDUCTION</scope>
    <scope>DOMAIN</scope>
    <scope>INTERACTION WITH ATRN; MEGF8; TECR; MSI2; PLRG1; BYSL; MTERF3; PSMA1; MRPS18B; PRPF4; FASTKD2; SLC25A1; SMU1; CNOT9; MRPS2; MAGT1; CHD1; FXR2; EMD; PSMD8; HDAC1; RAN; HSD17B12; TXNDC5 AND MRPL19</scope>
    <scope>PHOSPHORYLATION AT SER-660; SER-661; SER-662 AND SER-663</scope>
</reference>
<dbReference type="EC" id="2.3.2.27" evidence="5"/>
<dbReference type="EMBL" id="AB067504">
    <property type="protein sequence ID" value="BAB67810.2"/>
    <property type="status" value="ALT_INIT"/>
    <property type="molecule type" value="mRNA"/>
</dbReference>
<dbReference type="EMBL" id="AK055949">
    <property type="protein sequence ID" value="BAB71053.1"/>
    <property type="status" value="ALT_INIT"/>
    <property type="molecule type" value="mRNA"/>
</dbReference>
<dbReference type="EMBL" id="AK091467">
    <property type="protein sequence ID" value="BAC03669.1"/>
    <property type="status" value="ALT_INIT"/>
    <property type="molecule type" value="mRNA"/>
</dbReference>
<dbReference type="CCDS" id="CCDS32740.1">
    <molecule id="Q96PX1-1"/>
</dbReference>
<dbReference type="CCDS" id="CCDS82208.1">
    <molecule id="Q96PX1-2"/>
</dbReference>
<dbReference type="RefSeq" id="NP_001317430.1">
    <molecule id="Q96PX1-2"/>
    <property type="nucleotide sequence ID" value="NM_001330501.2"/>
</dbReference>
<dbReference type="RefSeq" id="NP_443148.1">
    <molecule id="Q96PX1-1"/>
    <property type="nucleotide sequence ID" value="NM_052916.3"/>
</dbReference>
<dbReference type="BioGRID" id="125364">
    <property type="interactions" value="47"/>
</dbReference>
<dbReference type="ELM" id="Q96PX1"/>
<dbReference type="FunCoup" id="Q96PX1">
    <property type="interactions" value="365"/>
</dbReference>
<dbReference type="IntAct" id="Q96PX1">
    <property type="interactions" value="9"/>
</dbReference>
<dbReference type="STRING" id="9606.ENSP00000269391"/>
<dbReference type="iPTMnet" id="Q96PX1"/>
<dbReference type="PhosphoSitePlus" id="Q96PX1"/>
<dbReference type="BioMuta" id="RNF157"/>
<dbReference type="DMDM" id="118573798"/>
<dbReference type="jPOST" id="Q96PX1"/>
<dbReference type="MassIVE" id="Q96PX1"/>
<dbReference type="PaxDb" id="9606-ENSP00000269391"/>
<dbReference type="PeptideAtlas" id="Q96PX1"/>
<dbReference type="ProteomicsDB" id="77780">
    <molecule id="Q96PX1-1"/>
</dbReference>
<dbReference type="ProteomicsDB" id="77781">
    <molecule id="Q96PX1-2"/>
</dbReference>
<dbReference type="Antibodypedia" id="32383">
    <property type="antibodies" value="111 antibodies from 16 providers"/>
</dbReference>
<dbReference type="DNASU" id="114804"/>
<dbReference type="Ensembl" id="ENST00000269391.11">
    <molecule id="Q96PX1-1"/>
    <property type="protein sequence ID" value="ENSP00000269391.4"/>
    <property type="gene ID" value="ENSG00000141576.16"/>
</dbReference>
<dbReference type="Ensembl" id="ENST00000319945.10">
    <molecule id="Q96PX1-2"/>
    <property type="protein sequence ID" value="ENSP00000321837.4"/>
    <property type="gene ID" value="ENSG00000141576.16"/>
</dbReference>
<dbReference type="GeneID" id="114804"/>
<dbReference type="KEGG" id="hsa:114804"/>
<dbReference type="MANE-Select" id="ENST00000269391.11">
    <property type="protein sequence ID" value="ENSP00000269391.4"/>
    <property type="RefSeq nucleotide sequence ID" value="NM_052916.3"/>
    <property type="RefSeq protein sequence ID" value="NP_443148.1"/>
</dbReference>
<dbReference type="UCSC" id="uc002jqz.4">
    <molecule id="Q96PX1-1"/>
    <property type="organism name" value="human"/>
</dbReference>
<dbReference type="AGR" id="HGNC:29402"/>
<dbReference type="CTD" id="114804"/>
<dbReference type="DisGeNET" id="114804"/>
<dbReference type="GeneCards" id="RNF157"/>
<dbReference type="HGNC" id="HGNC:29402">
    <property type="gene designation" value="RNF157"/>
</dbReference>
<dbReference type="HPA" id="ENSG00000141576">
    <property type="expression patterns" value="Tissue enhanced (brain, retina, skeletal muscle)"/>
</dbReference>
<dbReference type="MIM" id="621044">
    <property type="type" value="gene"/>
</dbReference>
<dbReference type="neXtProt" id="NX_Q96PX1"/>
<dbReference type="OpenTargets" id="ENSG00000141576"/>
<dbReference type="PharmGKB" id="PA134974884"/>
<dbReference type="VEuPathDB" id="HostDB:ENSG00000141576"/>
<dbReference type="eggNOG" id="KOG4265">
    <property type="taxonomic scope" value="Eukaryota"/>
</dbReference>
<dbReference type="GeneTree" id="ENSGT00390000009925"/>
<dbReference type="HOGENOM" id="CLU_016631_2_0_1"/>
<dbReference type="InParanoid" id="Q96PX1"/>
<dbReference type="OrthoDB" id="10014838at2759"/>
<dbReference type="PAN-GO" id="Q96PX1">
    <property type="GO annotations" value="9 GO annotations based on evolutionary models"/>
</dbReference>
<dbReference type="PhylomeDB" id="Q96PX1"/>
<dbReference type="TreeFam" id="TF314969"/>
<dbReference type="PathwayCommons" id="Q96PX1"/>
<dbReference type="SignaLink" id="Q96PX1"/>
<dbReference type="SIGNOR" id="Q96PX1"/>
<dbReference type="BioGRID-ORCS" id="114804">
    <property type="hits" value="12 hits in 1184 CRISPR screens"/>
</dbReference>
<dbReference type="ChiTaRS" id="RNF157">
    <property type="organism name" value="human"/>
</dbReference>
<dbReference type="GenomeRNAi" id="114804"/>
<dbReference type="Pharos" id="Q96PX1">
    <property type="development level" value="Tbio"/>
</dbReference>
<dbReference type="PRO" id="PR:Q96PX1"/>
<dbReference type="Proteomes" id="UP000005640">
    <property type="component" value="Chromosome 17"/>
</dbReference>
<dbReference type="RNAct" id="Q96PX1">
    <property type="molecule type" value="protein"/>
</dbReference>
<dbReference type="Bgee" id="ENSG00000141576">
    <property type="expression patterns" value="Expressed in lateral nuclear group of thalamus and 134 other cell types or tissues"/>
</dbReference>
<dbReference type="ExpressionAtlas" id="Q96PX1">
    <property type="expression patterns" value="baseline and differential"/>
</dbReference>
<dbReference type="GO" id="GO:0044297">
    <property type="term" value="C:cell body"/>
    <property type="evidence" value="ECO:0000250"/>
    <property type="project" value="UniProtKB"/>
</dbReference>
<dbReference type="GO" id="GO:0005737">
    <property type="term" value="C:cytoplasm"/>
    <property type="evidence" value="ECO:0000250"/>
    <property type="project" value="UniProtKB"/>
</dbReference>
<dbReference type="GO" id="GO:0061630">
    <property type="term" value="F:ubiquitin protein ligase activity"/>
    <property type="evidence" value="ECO:0000250"/>
    <property type="project" value="UniProtKB"/>
</dbReference>
<dbReference type="GO" id="GO:0008270">
    <property type="term" value="F:zinc ion binding"/>
    <property type="evidence" value="ECO:0007669"/>
    <property type="project" value="UniProtKB-KW"/>
</dbReference>
<dbReference type="GO" id="GO:0043066">
    <property type="term" value="P:negative regulation of apoptotic process"/>
    <property type="evidence" value="ECO:0000250"/>
    <property type="project" value="UniProtKB"/>
</dbReference>
<dbReference type="GO" id="GO:1903861">
    <property type="term" value="P:positive regulation of dendrite extension"/>
    <property type="evidence" value="ECO:0000250"/>
    <property type="project" value="UniProtKB"/>
</dbReference>
<dbReference type="GO" id="GO:0016567">
    <property type="term" value="P:protein ubiquitination"/>
    <property type="evidence" value="ECO:0000250"/>
    <property type="project" value="UniProtKB"/>
</dbReference>
<dbReference type="CDD" id="cd16817">
    <property type="entry name" value="mRING-HC-C3HC5_RNF157"/>
    <property type="match status" value="1"/>
</dbReference>
<dbReference type="FunFam" id="3.30.40.10:FF:000013">
    <property type="entry name" value="E3 ubiquitin-protein ligase MGRN1 isoform 1"/>
    <property type="match status" value="1"/>
</dbReference>
<dbReference type="Gene3D" id="3.30.40.10">
    <property type="entry name" value="Zinc/RING finger domain, C3HC4 (zinc finger)"/>
    <property type="match status" value="1"/>
</dbReference>
<dbReference type="InterPro" id="IPR045194">
    <property type="entry name" value="MGRN1/RNF157-like"/>
</dbReference>
<dbReference type="InterPro" id="IPR001841">
    <property type="entry name" value="Znf_RING"/>
</dbReference>
<dbReference type="InterPro" id="IPR013083">
    <property type="entry name" value="Znf_RING/FYVE/PHD"/>
</dbReference>
<dbReference type="PANTHER" id="PTHR22996:SF1">
    <property type="entry name" value="E3 UBIQUITIN LIGASE RNF157"/>
    <property type="match status" value="1"/>
</dbReference>
<dbReference type="PANTHER" id="PTHR22996">
    <property type="entry name" value="MAHOGUNIN"/>
    <property type="match status" value="1"/>
</dbReference>
<dbReference type="Pfam" id="PF13920">
    <property type="entry name" value="zf-C3HC4_3"/>
    <property type="match status" value="1"/>
</dbReference>
<dbReference type="SMART" id="SM00184">
    <property type="entry name" value="RING"/>
    <property type="match status" value="1"/>
</dbReference>
<dbReference type="SUPFAM" id="SSF57850">
    <property type="entry name" value="RING/U-box"/>
    <property type="match status" value="1"/>
</dbReference>
<dbReference type="PROSITE" id="PS50089">
    <property type="entry name" value="ZF_RING_2"/>
    <property type="match status" value="1"/>
</dbReference>
<gene>
    <name type="primary">RNF157</name>
    <name type="synonym">KIAA1917</name>
</gene>
<proteinExistence type="evidence at protein level"/>
<comment type="function">
    <text evidence="5 6">E3 ubiquitin ligase that ubiquitinates APBB1 for its degradation by the proteasome and thus prevents apoptosis and promotes survival of neurons (PubMed:25342469). Has a dual role in neurons as it is also required for dendrite growth and maintenance for which its ligase activity is not critical (PubMed:25342469). May act as a scaffold molecule to regulate this process (PubMed:25342469). Acts as a downstream effector of the interconnected PI3K and MAPK signaling pathways and thus participates in the regulation of the cell cycle (PubMed:28655764).</text>
</comment>
<comment type="catalytic activity">
    <reaction evidence="5">
        <text>S-ubiquitinyl-[E2 ubiquitin-conjugating enzyme]-L-cysteine + [acceptor protein]-L-lysine = [E2 ubiquitin-conjugating enzyme]-L-cysteine + N(6)-ubiquitinyl-[acceptor protein]-L-lysine.</text>
        <dbReference type="EC" id="2.3.2.27"/>
    </reaction>
</comment>
<comment type="subunit">
    <text evidence="5 6">Interacts with APBB1 (PubMed:25342469). Interacts with CHD1; CHD1-binding controls RNF157 stability (PubMed:28655764). Interacts with ATRN, MEGF8, TECR, MSI2, PLRG1, BYSL, MTERF3, PSMA1, MRPS18B, PRPF4, FASTKD2, SLC25A1, SMU1, CNOT9, MRPS2, MAGT1, FXR2, EMD, PSMD8, HDAC1, RAN, HSD17B12, TXNDC5 and MRPL19 (PubMed:28655764).</text>
</comment>
<comment type="subcellular location">
    <subcellularLocation>
        <location evidence="1">Cytoplasm</location>
    </subcellularLocation>
</comment>
<comment type="alternative products">
    <event type="alternative splicing"/>
    <isoform>
        <id>Q96PX1-1</id>
        <name>1</name>
        <sequence type="displayed"/>
    </isoform>
    <isoform>
        <id>Q96PX1-2</id>
        <name>2</name>
        <sequence type="described" ref="VSP_021735"/>
    </isoform>
</comment>
<comment type="induction">
    <text evidence="6">Expression is cell cycle-specific with higher levels in cells arrested in G1/S and G2/M (PubMed:28655764).</text>
</comment>
<comment type="domain">
    <text evidence="6">The D-box motifs play a key role in RNF157 stabilization (PubMed:28655764).</text>
</comment>
<comment type="PTM">
    <text evidence="6">Phosphorylation at Ser-660, Ser-661, Ser-662 and Ser-663 downstream of the PI3K and MAPK pathways influences the E3 ligase activity and stability of RNF157 during the cell cycle in an anaphase-promoting complex/cyclosome-CDH1-dependent manner (PubMed:28655764).</text>
</comment>
<comment type="sequence caution" evidence="10">
    <conflict type="erroneous initiation">
        <sequence resource="EMBL-CDS" id="BAB67810"/>
    </conflict>
</comment>
<comment type="sequence caution" evidence="10">
    <conflict type="erroneous initiation">
        <sequence resource="EMBL-CDS" id="BAB71053"/>
    </conflict>
</comment>
<comment type="sequence caution" evidence="10">
    <conflict type="erroneous initiation">
        <sequence resource="EMBL-CDS" id="BAC03669"/>
    </conflict>
</comment>
<evidence type="ECO:0000250" key="1">
    <source>
        <dbReference type="UniProtKB" id="M0R5D6"/>
    </source>
</evidence>
<evidence type="ECO:0000255" key="2">
    <source>
        <dbReference type="PROSITE-ProRule" id="PRU00175"/>
    </source>
</evidence>
<evidence type="ECO:0000256" key="3">
    <source>
        <dbReference type="SAM" id="MobiDB-lite"/>
    </source>
</evidence>
<evidence type="ECO:0000269" key="4">
    <source>
    </source>
</evidence>
<evidence type="ECO:0000269" key="5">
    <source>
    </source>
</evidence>
<evidence type="ECO:0000269" key="6">
    <source>
    </source>
</evidence>
<evidence type="ECO:0000303" key="7">
    <source>
    </source>
</evidence>
<evidence type="ECO:0000303" key="8">
    <source>
    </source>
</evidence>
<evidence type="ECO:0000303" key="9">
    <source>
    </source>
</evidence>
<evidence type="ECO:0000305" key="10"/>
<keyword id="KW-0025">Alternative splicing</keyword>
<keyword id="KW-0963">Cytoplasm</keyword>
<keyword id="KW-0449">Lipoprotein</keyword>
<keyword id="KW-0479">Metal-binding</keyword>
<keyword id="KW-0519">Myristate</keyword>
<keyword id="KW-0597">Phosphoprotein</keyword>
<keyword id="KW-1267">Proteomics identification</keyword>
<keyword id="KW-1185">Reference proteome</keyword>
<keyword id="KW-0808">Transferase</keyword>
<keyword id="KW-0833">Ubl conjugation pathway</keyword>
<keyword id="KW-0862">Zinc</keyword>
<keyword id="KW-0863">Zinc-finger</keyword>
<organism>
    <name type="scientific">Homo sapiens</name>
    <name type="common">Human</name>
    <dbReference type="NCBI Taxonomy" id="9606"/>
    <lineage>
        <taxon>Eukaryota</taxon>
        <taxon>Metazoa</taxon>
        <taxon>Chordata</taxon>
        <taxon>Craniata</taxon>
        <taxon>Vertebrata</taxon>
        <taxon>Euteleostomi</taxon>
        <taxon>Mammalia</taxon>
        <taxon>Eutheria</taxon>
        <taxon>Euarchontoglires</taxon>
        <taxon>Primates</taxon>
        <taxon>Haplorrhini</taxon>
        <taxon>Catarrhini</taxon>
        <taxon>Hominidae</taxon>
        <taxon>Homo</taxon>
    </lineage>
</organism>
<protein>
    <recommendedName>
        <fullName evidence="8">E3 ubiquitin ligase RNF157</fullName>
        <ecNumber evidence="5">2.3.2.27</ecNumber>
    </recommendedName>
    <alternativeName>
        <fullName>RING finger protein 157</fullName>
    </alternativeName>
    <alternativeName>
        <fullName evidence="10">RING-type E3 ubiquitin transferase RNF157</fullName>
    </alternativeName>
</protein>
<name>RN157_HUMAN</name>
<accession>Q96PX1</accession>
<accession>Q8NB72</accession>
<accession>Q96N56</accession>
<sequence>MGALTSRQHAGVEEVDIPSNSVYRYPPKSGSYFASHFIMGGEKFDSTHPEGYLFGENSDLNFLGNRPVVFPYAAPPPQEPVKTLRSLVNIRKDTLRLVKCAEEVKSPGEEASKAKVHYNVEFTFDTDARVAITIYYQATEEFQNGIASYIPKDNSLQSETVQYKRGVCQQFCLPSHTVDPSEWAEEELGFDLDREVYPLVVHAVVDEGDEYFGHCHVLLGTFEKHTDGTFCVKPLKQKQVVDGVSYLLQEIYGIENKYNTQDSKVAEDEVSDNSAECVVCLSDVRDTLILPCRHLCLCNTCADTLRYQANNCPICRLPFRALLQIRAMRKKLGPLSPTSFNPIISSQTSDSEEHPSSENIPPGYEVVSLLEALNGPLTPSPAVPPLHVLGDGHLSGMLPSYGSDGHLPPVRTISPLDRLSDSSSQGLKLKKSLSKSTSQNSSVLHEEEDEHSCSESETQLSQRPSVQHLGEECGVTPESENLTLSSSGAIDQSSCTGTPLSSTISSPEGPASSSLAQSVMSMASSQISTDTVSSMSGSYIAPGTEEEGEALSSPQPASRAPSEEGEGLPAESPDSNFAGLPAGEQDAEGNDVIEEEDGSPTQEGQRTCAFLGMECDNNNDFDIASVKALDNKLCSEVCLPGAWQADDNAVSRNAQRRRLSSSSLEDSETRPCVWGPLAV</sequence>
<feature type="initiator methionine" description="Removed">
    <location>
        <position position="1"/>
    </location>
</feature>
<feature type="chain" id="PRO_0000261614" description="E3 ubiquitin ligase RNF157">
    <location>
        <begin position="2"/>
        <end position="679"/>
    </location>
</feature>
<feature type="zinc finger region" description="RING-type" evidence="2">
    <location>
        <begin position="277"/>
        <end position="316"/>
    </location>
</feature>
<feature type="region of interest" description="Disordered" evidence="3">
    <location>
        <begin position="339"/>
        <end position="362"/>
    </location>
</feature>
<feature type="region of interest" description="Disordered" evidence="3">
    <location>
        <begin position="416"/>
        <end position="604"/>
    </location>
</feature>
<feature type="region of interest" description="Disordered" evidence="3">
    <location>
        <begin position="650"/>
        <end position="679"/>
    </location>
</feature>
<feature type="short sequence motif" description="D-box 1" evidence="9">
    <location>
        <begin position="329"/>
        <end position="332"/>
    </location>
</feature>
<feature type="short sequence motif" description="D-box 2" evidence="9">
    <location>
        <begin position="656"/>
        <end position="659"/>
    </location>
</feature>
<feature type="compositionally biased region" description="Polar residues" evidence="3">
    <location>
        <begin position="339"/>
        <end position="349"/>
    </location>
</feature>
<feature type="compositionally biased region" description="Polar residues" evidence="3">
    <location>
        <begin position="478"/>
        <end position="537"/>
    </location>
</feature>
<feature type="compositionally biased region" description="Acidic residues" evidence="3">
    <location>
        <begin position="585"/>
        <end position="598"/>
    </location>
</feature>
<feature type="modified residue" description="Phosphoserine" evidence="6">
    <location>
        <position position="660"/>
    </location>
</feature>
<feature type="modified residue" description="Phosphoserine" evidence="6">
    <location>
        <position position="661"/>
    </location>
</feature>
<feature type="modified residue" description="Phosphoserine" evidence="6">
    <location>
        <position position="662"/>
    </location>
</feature>
<feature type="modified residue" description="Phosphoserine" evidence="6">
    <location>
        <position position="663"/>
    </location>
</feature>
<feature type="lipid moiety-binding region" description="N-myristoyl glycine" evidence="4">
    <location>
        <position position="2"/>
    </location>
</feature>
<feature type="splice variant" id="VSP_021735" description="In isoform 2." evidence="7">
    <location>
        <begin position="568"/>
        <end position="589"/>
    </location>
</feature>
<feature type="sequence variant" id="VAR_029458" description="In dbSNP:rs2289602.">
    <original>P</original>
    <variation>H</variation>
    <location>
        <position position="80"/>
    </location>
</feature>
<feature type="sequence variant" id="VAR_029459" description="In dbSNP:rs11539879.">
    <original>G</original>
    <variation>R</variation>
    <location>
        <position position="208"/>
    </location>
</feature>
<feature type="sequence variant" id="VAR_061817" description="In dbSNP:rs59053255.">
    <original>E</original>
    <variation>V</variation>
    <location>
        <position position="596"/>
    </location>
</feature>